<evidence type="ECO:0000255" key="1">
    <source>
        <dbReference type="HAMAP-Rule" id="MF_00127"/>
    </source>
</evidence>
<name>SYH_CHLL3</name>
<keyword id="KW-0030">Aminoacyl-tRNA synthetase</keyword>
<keyword id="KW-0067">ATP-binding</keyword>
<keyword id="KW-0963">Cytoplasm</keyword>
<keyword id="KW-0436">Ligase</keyword>
<keyword id="KW-0547">Nucleotide-binding</keyword>
<keyword id="KW-0648">Protein biosynthesis</keyword>
<keyword id="KW-1185">Reference proteome</keyword>
<accession>Q3B1Z1</accession>
<comment type="catalytic activity">
    <reaction evidence="1">
        <text>tRNA(His) + L-histidine + ATP = L-histidyl-tRNA(His) + AMP + diphosphate + H(+)</text>
        <dbReference type="Rhea" id="RHEA:17313"/>
        <dbReference type="Rhea" id="RHEA-COMP:9665"/>
        <dbReference type="Rhea" id="RHEA-COMP:9689"/>
        <dbReference type="ChEBI" id="CHEBI:15378"/>
        <dbReference type="ChEBI" id="CHEBI:30616"/>
        <dbReference type="ChEBI" id="CHEBI:33019"/>
        <dbReference type="ChEBI" id="CHEBI:57595"/>
        <dbReference type="ChEBI" id="CHEBI:78442"/>
        <dbReference type="ChEBI" id="CHEBI:78527"/>
        <dbReference type="ChEBI" id="CHEBI:456215"/>
        <dbReference type="EC" id="6.1.1.21"/>
    </reaction>
</comment>
<comment type="subunit">
    <text evidence="1">Homodimer.</text>
</comment>
<comment type="subcellular location">
    <subcellularLocation>
        <location evidence="1">Cytoplasm</location>
    </subcellularLocation>
</comment>
<comment type="similarity">
    <text evidence="1">Belongs to the class-II aminoacyl-tRNA synthetase family.</text>
</comment>
<dbReference type="EC" id="6.1.1.21" evidence="1"/>
<dbReference type="EMBL" id="CP000096">
    <property type="protein sequence ID" value="ABB24640.1"/>
    <property type="molecule type" value="Genomic_DNA"/>
</dbReference>
<dbReference type="RefSeq" id="WP_011358512.1">
    <property type="nucleotide sequence ID" value="NC_007512.1"/>
</dbReference>
<dbReference type="SMR" id="Q3B1Z1"/>
<dbReference type="STRING" id="319225.Plut_1786"/>
<dbReference type="KEGG" id="plt:Plut_1786"/>
<dbReference type="eggNOG" id="COG0124">
    <property type="taxonomic scope" value="Bacteria"/>
</dbReference>
<dbReference type="HOGENOM" id="CLU_025113_1_1_10"/>
<dbReference type="OrthoDB" id="9800814at2"/>
<dbReference type="Proteomes" id="UP000002709">
    <property type="component" value="Chromosome"/>
</dbReference>
<dbReference type="GO" id="GO:0005737">
    <property type="term" value="C:cytoplasm"/>
    <property type="evidence" value="ECO:0007669"/>
    <property type="project" value="UniProtKB-SubCell"/>
</dbReference>
<dbReference type="GO" id="GO:0005524">
    <property type="term" value="F:ATP binding"/>
    <property type="evidence" value="ECO:0007669"/>
    <property type="project" value="UniProtKB-UniRule"/>
</dbReference>
<dbReference type="GO" id="GO:0004821">
    <property type="term" value="F:histidine-tRNA ligase activity"/>
    <property type="evidence" value="ECO:0007669"/>
    <property type="project" value="UniProtKB-UniRule"/>
</dbReference>
<dbReference type="GO" id="GO:0006427">
    <property type="term" value="P:histidyl-tRNA aminoacylation"/>
    <property type="evidence" value="ECO:0007669"/>
    <property type="project" value="UniProtKB-UniRule"/>
</dbReference>
<dbReference type="CDD" id="cd00773">
    <property type="entry name" value="HisRS-like_core"/>
    <property type="match status" value="1"/>
</dbReference>
<dbReference type="CDD" id="cd00859">
    <property type="entry name" value="HisRS_anticodon"/>
    <property type="match status" value="1"/>
</dbReference>
<dbReference type="Gene3D" id="3.40.50.800">
    <property type="entry name" value="Anticodon-binding domain"/>
    <property type="match status" value="1"/>
</dbReference>
<dbReference type="Gene3D" id="3.30.930.10">
    <property type="entry name" value="Bira Bifunctional Protein, Domain 2"/>
    <property type="match status" value="1"/>
</dbReference>
<dbReference type="HAMAP" id="MF_00127">
    <property type="entry name" value="His_tRNA_synth"/>
    <property type="match status" value="1"/>
</dbReference>
<dbReference type="InterPro" id="IPR006195">
    <property type="entry name" value="aa-tRNA-synth_II"/>
</dbReference>
<dbReference type="InterPro" id="IPR045864">
    <property type="entry name" value="aa-tRNA-synth_II/BPL/LPL"/>
</dbReference>
<dbReference type="InterPro" id="IPR004154">
    <property type="entry name" value="Anticodon-bd"/>
</dbReference>
<dbReference type="InterPro" id="IPR036621">
    <property type="entry name" value="Anticodon-bd_dom_sf"/>
</dbReference>
<dbReference type="InterPro" id="IPR015807">
    <property type="entry name" value="His-tRNA-ligase"/>
</dbReference>
<dbReference type="InterPro" id="IPR041715">
    <property type="entry name" value="HisRS-like_core"/>
</dbReference>
<dbReference type="InterPro" id="IPR004516">
    <property type="entry name" value="HisRS/HisZ"/>
</dbReference>
<dbReference type="InterPro" id="IPR033656">
    <property type="entry name" value="HisRS_anticodon"/>
</dbReference>
<dbReference type="NCBIfam" id="TIGR00442">
    <property type="entry name" value="hisS"/>
    <property type="match status" value="1"/>
</dbReference>
<dbReference type="PANTHER" id="PTHR43707:SF1">
    <property type="entry name" value="HISTIDINE--TRNA LIGASE, MITOCHONDRIAL-RELATED"/>
    <property type="match status" value="1"/>
</dbReference>
<dbReference type="PANTHER" id="PTHR43707">
    <property type="entry name" value="HISTIDYL-TRNA SYNTHETASE"/>
    <property type="match status" value="1"/>
</dbReference>
<dbReference type="Pfam" id="PF03129">
    <property type="entry name" value="HGTP_anticodon"/>
    <property type="match status" value="1"/>
</dbReference>
<dbReference type="Pfam" id="PF13393">
    <property type="entry name" value="tRNA-synt_His"/>
    <property type="match status" value="1"/>
</dbReference>
<dbReference type="PIRSF" id="PIRSF001549">
    <property type="entry name" value="His-tRNA_synth"/>
    <property type="match status" value="1"/>
</dbReference>
<dbReference type="SUPFAM" id="SSF52954">
    <property type="entry name" value="Class II aaRS ABD-related"/>
    <property type="match status" value="1"/>
</dbReference>
<dbReference type="SUPFAM" id="SSF55681">
    <property type="entry name" value="Class II aaRS and biotin synthetases"/>
    <property type="match status" value="1"/>
</dbReference>
<dbReference type="PROSITE" id="PS50862">
    <property type="entry name" value="AA_TRNA_LIGASE_II"/>
    <property type="match status" value="1"/>
</dbReference>
<gene>
    <name evidence="1" type="primary">hisS</name>
    <name type="ordered locus">Plut_1786</name>
</gene>
<proteinExistence type="inferred from homology"/>
<sequence length="430" mass="48029">MSQYQAVKGTRDIFPEEAAQWKHVEEVVHTLASLYGFSEVRTPVFEYTELFQRGIGATTDIVGKEMFTFLPDPGGRSLTLRPEMTAGVMRAALQRNLLSQAPVHKLYYISELFRKERPQAGRQRQFSQFGAELLGVSSPAAVAEVLTFMMQVFETLGLSGLRLRINTLGDLEDRARYREALRSYFQPYEGELDESSKERLEKNPLRILDSKNPALRDMITGAPRLFDFVKAEGVREFEAVLRFLADRGIDYDVDHLLVRGLDYYCHTAFEVQSTALGAQDAIGGGGRYDGLAKELGGGKEMPAVGFAVGMERLLIAMEKQGLFATLNPHGPLVYVVVQQSELADHGMQVAFKLRRSGISTEIDLAARSMKAQMREANRIRSGYALFVGQSELESGQYALKNLVTSEQTTLELQAIIEILREPSIREGLKA</sequence>
<organism>
    <name type="scientific">Chlorobium luteolum (strain DSM 273 / BCRC 81028 / 2530)</name>
    <name type="common">Pelodictyon luteolum</name>
    <dbReference type="NCBI Taxonomy" id="319225"/>
    <lineage>
        <taxon>Bacteria</taxon>
        <taxon>Pseudomonadati</taxon>
        <taxon>Chlorobiota</taxon>
        <taxon>Chlorobiia</taxon>
        <taxon>Chlorobiales</taxon>
        <taxon>Chlorobiaceae</taxon>
        <taxon>Chlorobium/Pelodictyon group</taxon>
        <taxon>Pelodictyon</taxon>
    </lineage>
</organism>
<reference key="1">
    <citation type="submission" date="2005-08" db="EMBL/GenBank/DDBJ databases">
        <title>Complete sequence of Pelodictyon luteolum DSM 273.</title>
        <authorList>
            <consortium name="US DOE Joint Genome Institute"/>
            <person name="Copeland A."/>
            <person name="Lucas S."/>
            <person name="Lapidus A."/>
            <person name="Barry K."/>
            <person name="Detter J.C."/>
            <person name="Glavina T."/>
            <person name="Hammon N."/>
            <person name="Israni S."/>
            <person name="Pitluck S."/>
            <person name="Bryant D."/>
            <person name="Schmutz J."/>
            <person name="Larimer F."/>
            <person name="Land M."/>
            <person name="Kyrpides N."/>
            <person name="Ivanova N."/>
            <person name="Richardson P."/>
        </authorList>
    </citation>
    <scope>NUCLEOTIDE SEQUENCE [LARGE SCALE GENOMIC DNA]</scope>
    <source>
        <strain>DSM 273 / BCRC 81028 / 2530</strain>
    </source>
</reference>
<feature type="chain" id="PRO_1000057830" description="Histidine--tRNA ligase">
    <location>
        <begin position="1"/>
        <end position="430"/>
    </location>
</feature>
<protein>
    <recommendedName>
        <fullName evidence="1">Histidine--tRNA ligase</fullName>
        <ecNumber evidence="1">6.1.1.21</ecNumber>
    </recommendedName>
    <alternativeName>
        <fullName evidence="1">Histidyl-tRNA synthetase</fullName>
        <shortName evidence="1">HisRS</shortName>
    </alternativeName>
</protein>